<feature type="chain" id="PRO_0000254237" description="ATP synthase subunit beta">
    <location>
        <begin position="1"/>
        <end position="465"/>
    </location>
</feature>
<feature type="binding site" evidence="1">
    <location>
        <begin position="152"/>
        <end position="159"/>
    </location>
    <ligand>
        <name>ATP</name>
        <dbReference type="ChEBI" id="CHEBI:30616"/>
    </ligand>
</feature>
<protein>
    <recommendedName>
        <fullName evidence="1">ATP synthase subunit beta</fullName>
        <ecNumber evidence="1">7.1.2.2</ecNumber>
    </recommendedName>
    <alternativeName>
        <fullName evidence="1">ATP synthase F1 sector subunit beta</fullName>
    </alternativeName>
    <alternativeName>
        <fullName evidence="1">F-ATPase subunit beta</fullName>
    </alternativeName>
</protein>
<dbReference type="EC" id="7.1.2.2" evidence="1"/>
<dbReference type="EMBL" id="CP000025">
    <property type="protein sequence ID" value="AAW34697.1"/>
    <property type="molecule type" value="Genomic_DNA"/>
</dbReference>
<dbReference type="RefSeq" id="WP_002852005.1">
    <property type="nucleotide sequence ID" value="NC_003912.7"/>
</dbReference>
<dbReference type="SMR" id="Q5HX59"/>
<dbReference type="KEGG" id="cjr:CJE0102"/>
<dbReference type="HOGENOM" id="CLU_022398_0_2_7"/>
<dbReference type="GO" id="GO:0005886">
    <property type="term" value="C:plasma membrane"/>
    <property type="evidence" value="ECO:0007669"/>
    <property type="project" value="UniProtKB-SubCell"/>
</dbReference>
<dbReference type="GO" id="GO:0045259">
    <property type="term" value="C:proton-transporting ATP synthase complex"/>
    <property type="evidence" value="ECO:0007669"/>
    <property type="project" value="UniProtKB-KW"/>
</dbReference>
<dbReference type="GO" id="GO:0005524">
    <property type="term" value="F:ATP binding"/>
    <property type="evidence" value="ECO:0007669"/>
    <property type="project" value="UniProtKB-UniRule"/>
</dbReference>
<dbReference type="GO" id="GO:0016887">
    <property type="term" value="F:ATP hydrolysis activity"/>
    <property type="evidence" value="ECO:0007669"/>
    <property type="project" value="InterPro"/>
</dbReference>
<dbReference type="GO" id="GO:0046933">
    <property type="term" value="F:proton-transporting ATP synthase activity, rotational mechanism"/>
    <property type="evidence" value="ECO:0007669"/>
    <property type="project" value="UniProtKB-UniRule"/>
</dbReference>
<dbReference type="CDD" id="cd18110">
    <property type="entry name" value="ATP-synt_F1_beta_C"/>
    <property type="match status" value="1"/>
</dbReference>
<dbReference type="CDD" id="cd18115">
    <property type="entry name" value="ATP-synt_F1_beta_N"/>
    <property type="match status" value="1"/>
</dbReference>
<dbReference type="CDD" id="cd01133">
    <property type="entry name" value="F1-ATPase_beta_CD"/>
    <property type="match status" value="1"/>
</dbReference>
<dbReference type="FunFam" id="1.10.1140.10:FF:000001">
    <property type="entry name" value="ATP synthase subunit beta"/>
    <property type="match status" value="1"/>
</dbReference>
<dbReference type="FunFam" id="3.40.50.300:FF:000004">
    <property type="entry name" value="ATP synthase subunit beta"/>
    <property type="match status" value="1"/>
</dbReference>
<dbReference type="Gene3D" id="2.40.10.170">
    <property type="match status" value="1"/>
</dbReference>
<dbReference type="Gene3D" id="1.10.1140.10">
    <property type="entry name" value="Bovine Mitochondrial F1-atpase, Atp Synthase Beta Chain, Chain D, domain 3"/>
    <property type="match status" value="1"/>
</dbReference>
<dbReference type="Gene3D" id="3.40.50.300">
    <property type="entry name" value="P-loop containing nucleotide triphosphate hydrolases"/>
    <property type="match status" value="1"/>
</dbReference>
<dbReference type="HAMAP" id="MF_01347">
    <property type="entry name" value="ATP_synth_beta_bact"/>
    <property type="match status" value="1"/>
</dbReference>
<dbReference type="InterPro" id="IPR003593">
    <property type="entry name" value="AAA+_ATPase"/>
</dbReference>
<dbReference type="InterPro" id="IPR055190">
    <property type="entry name" value="ATP-synt_VA_C"/>
</dbReference>
<dbReference type="InterPro" id="IPR005722">
    <property type="entry name" value="ATP_synth_F1_bsu"/>
</dbReference>
<dbReference type="InterPro" id="IPR020003">
    <property type="entry name" value="ATPase_a/bsu_AS"/>
</dbReference>
<dbReference type="InterPro" id="IPR050053">
    <property type="entry name" value="ATPase_alpha/beta_chains"/>
</dbReference>
<dbReference type="InterPro" id="IPR004100">
    <property type="entry name" value="ATPase_F1/V1/A1_a/bsu_N"/>
</dbReference>
<dbReference type="InterPro" id="IPR036121">
    <property type="entry name" value="ATPase_F1/V1/A1_a/bsu_N_sf"/>
</dbReference>
<dbReference type="InterPro" id="IPR000194">
    <property type="entry name" value="ATPase_F1/V1/A1_a/bsu_nucl-bd"/>
</dbReference>
<dbReference type="InterPro" id="IPR024034">
    <property type="entry name" value="ATPase_F1/V1_b/a_C"/>
</dbReference>
<dbReference type="InterPro" id="IPR027417">
    <property type="entry name" value="P-loop_NTPase"/>
</dbReference>
<dbReference type="NCBIfam" id="TIGR01039">
    <property type="entry name" value="atpD"/>
    <property type="match status" value="1"/>
</dbReference>
<dbReference type="PANTHER" id="PTHR15184">
    <property type="entry name" value="ATP SYNTHASE"/>
    <property type="match status" value="1"/>
</dbReference>
<dbReference type="PANTHER" id="PTHR15184:SF71">
    <property type="entry name" value="ATP SYNTHASE SUBUNIT BETA, MITOCHONDRIAL"/>
    <property type="match status" value="1"/>
</dbReference>
<dbReference type="Pfam" id="PF00006">
    <property type="entry name" value="ATP-synt_ab"/>
    <property type="match status" value="1"/>
</dbReference>
<dbReference type="Pfam" id="PF02874">
    <property type="entry name" value="ATP-synt_ab_N"/>
    <property type="match status" value="1"/>
</dbReference>
<dbReference type="Pfam" id="PF22919">
    <property type="entry name" value="ATP-synt_VA_C"/>
    <property type="match status" value="1"/>
</dbReference>
<dbReference type="SMART" id="SM00382">
    <property type="entry name" value="AAA"/>
    <property type="match status" value="1"/>
</dbReference>
<dbReference type="SUPFAM" id="SSF47917">
    <property type="entry name" value="C-terminal domain of alpha and beta subunits of F1 ATP synthase"/>
    <property type="match status" value="1"/>
</dbReference>
<dbReference type="SUPFAM" id="SSF50615">
    <property type="entry name" value="N-terminal domain of alpha and beta subunits of F1 ATP synthase"/>
    <property type="match status" value="1"/>
</dbReference>
<dbReference type="SUPFAM" id="SSF52540">
    <property type="entry name" value="P-loop containing nucleoside triphosphate hydrolases"/>
    <property type="match status" value="1"/>
</dbReference>
<dbReference type="PROSITE" id="PS00152">
    <property type="entry name" value="ATPASE_ALPHA_BETA"/>
    <property type="match status" value="1"/>
</dbReference>
<accession>Q5HX59</accession>
<keyword id="KW-0066">ATP synthesis</keyword>
<keyword id="KW-0067">ATP-binding</keyword>
<keyword id="KW-0997">Cell inner membrane</keyword>
<keyword id="KW-1003">Cell membrane</keyword>
<keyword id="KW-0139">CF(1)</keyword>
<keyword id="KW-0375">Hydrogen ion transport</keyword>
<keyword id="KW-0406">Ion transport</keyword>
<keyword id="KW-0472">Membrane</keyword>
<keyword id="KW-0547">Nucleotide-binding</keyword>
<keyword id="KW-1278">Translocase</keyword>
<keyword id="KW-0813">Transport</keyword>
<gene>
    <name evidence="1" type="primary">atpD</name>
    <name type="ordered locus">CJE0102</name>
</gene>
<reference key="1">
    <citation type="journal article" date="2005" name="PLoS Biol.">
        <title>Major structural differences and novel potential virulence mechanisms from the genomes of multiple Campylobacter species.</title>
        <authorList>
            <person name="Fouts D.E."/>
            <person name="Mongodin E.F."/>
            <person name="Mandrell R.E."/>
            <person name="Miller W.G."/>
            <person name="Rasko D.A."/>
            <person name="Ravel J."/>
            <person name="Brinkac L.M."/>
            <person name="DeBoy R.T."/>
            <person name="Parker C.T."/>
            <person name="Daugherty S.C."/>
            <person name="Dodson R.J."/>
            <person name="Durkin A.S."/>
            <person name="Madupu R."/>
            <person name="Sullivan S.A."/>
            <person name="Shetty J.U."/>
            <person name="Ayodeji M.A."/>
            <person name="Shvartsbeyn A."/>
            <person name="Schatz M.C."/>
            <person name="Badger J.H."/>
            <person name="Fraser C.M."/>
            <person name="Nelson K.E."/>
        </authorList>
    </citation>
    <scope>NUCLEOTIDE SEQUENCE [LARGE SCALE GENOMIC DNA]</scope>
    <source>
        <strain>RM1221</strain>
    </source>
</reference>
<organism>
    <name type="scientific">Campylobacter jejuni (strain RM1221)</name>
    <dbReference type="NCBI Taxonomy" id="195099"/>
    <lineage>
        <taxon>Bacteria</taxon>
        <taxon>Pseudomonadati</taxon>
        <taxon>Campylobacterota</taxon>
        <taxon>Epsilonproteobacteria</taxon>
        <taxon>Campylobacterales</taxon>
        <taxon>Campylobacteraceae</taxon>
        <taxon>Campylobacter</taxon>
    </lineage>
</organism>
<proteinExistence type="inferred from homology"/>
<name>ATPB_CAMJR</name>
<sequence>MQGFISQVLGPVVDVDFNDYLPQINEAIVVNFESEGKKHKLVLEVAAHLGDNRVRTIAMDMTDGLVRGLKAEALGAPISVPVGEKVLGRIFNVTGDLIDEGEEISFDKKWAIHRDPPAFEDQSTKSEIFETGIKVVDLLAPYAKGGKVGLFGGAGVGKTVIIMELIHNVAFKHSGYSVFAGVGERTREGNDLYNEMKESNVLDKVALCYGQMNEPPGARNRIALTGLTMAEYFRDEMGLDVLMFIDNIFRFSQSGSEMSALLGRIPSAVGYQPTLASEMGKFQERITSTKKGSITSVQAVYVPADDLTDPAPATVFAHLDATTVLNRAIAEKGIYPAVDPLDSTSRMLDPNIIGEEHYKVARGVQSVLQKYKDLQDIIAILGMDELSEEDKLVVERARKIEKFLSQPFFVAEVFTGSPGKYISLEDTIAGFKGILEGKYDHLPENAFYMVGNIDEAIAKADKLKG</sequence>
<evidence type="ECO:0000255" key="1">
    <source>
        <dbReference type="HAMAP-Rule" id="MF_01347"/>
    </source>
</evidence>
<comment type="function">
    <text evidence="1">Produces ATP from ADP in the presence of a proton gradient across the membrane. The catalytic sites are hosted primarily by the beta subunits.</text>
</comment>
<comment type="catalytic activity">
    <reaction evidence="1">
        <text>ATP + H2O + 4 H(+)(in) = ADP + phosphate + 5 H(+)(out)</text>
        <dbReference type="Rhea" id="RHEA:57720"/>
        <dbReference type="ChEBI" id="CHEBI:15377"/>
        <dbReference type="ChEBI" id="CHEBI:15378"/>
        <dbReference type="ChEBI" id="CHEBI:30616"/>
        <dbReference type="ChEBI" id="CHEBI:43474"/>
        <dbReference type="ChEBI" id="CHEBI:456216"/>
        <dbReference type="EC" id="7.1.2.2"/>
    </reaction>
</comment>
<comment type="subunit">
    <text evidence="1">F-type ATPases have 2 components, CF(1) - the catalytic core - and CF(0) - the membrane proton channel. CF(1) has five subunits: alpha(3), beta(3), gamma(1), delta(1), epsilon(1). CF(0) has three main subunits: a(1), b(2) and c(9-12). The alpha and beta chains form an alternating ring which encloses part of the gamma chain. CF(1) is attached to CF(0) by a central stalk formed by the gamma and epsilon chains, while a peripheral stalk is formed by the delta and b chains.</text>
</comment>
<comment type="subcellular location">
    <subcellularLocation>
        <location evidence="1">Cell inner membrane</location>
        <topology evidence="1">Peripheral membrane protein</topology>
    </subcellularLocation>
</comment>
<comment type="similarity">
    <text evidence="1">Belongs to the ATPase alpha/beta chains family.</text>
</comment>